<reference key="1">
    <citation type="submission" date="1999-12" db="EMBL/GenBank/DDBJ databases">
        <title>d-xnp: Drosophila melanogaster xnp/atr-x gene.</title>
        <authorList>
            <person name="Cardoso C."/>
            <person name="Usseglio F."/>
            <person name="Villard L."/>
            <person name="Manfruelli P."/>
            <person name="Rothbacher U."/>
            <person name="Aragnol D."/>
            <person name="Pradel J."/>
            <person name="Fontes M."/>
        </authorList>
    </citation>
    <scope>NUCLEOTIDE SEQUENCE [MRNA]</scope>
</reference>
<reference key="2">
    <citation type="journal article" date="2000" name="Science">
        <title>The genome sequence of Drosophila melanogaster.</title>
        <authorList>
            <person name="Adams M.D."/>
            <person name="Celniker S.E."/>
            <person name="Holt R.A."/>
            <person name="Evans C.A."/>
            <person name="Gocayne J.D."/>
            <person name="Amanatides P.G."/>
            <person name="Scherer S.E."/>
            <person name="Li P.W."/>
            <person name="Hoskins R.A."/>
            <person name="Galle R.F."/>
            <person name="George R.A."/>
            <person name="Lewis S.E."/>
            <person name="Richards S."/>
            <person name="Ashburner M."/>
            <person name="Henderson S.N."/>
            <person name="Sutton G.G."/>
            <person name="Wortman J.R."/>
            <person name="Yandell M.D."/>
            <person name="Zhang Q."/>
            <person name="Chen L.X."/>
            <person name="Brandon R.C."/>
            <person name="Rogers Y.-H.C."/>
            <person name="Blazej R.G."/>
            <person name="Champe M."/>
            <person name="Pfeiffer B.D."/>
            <person name="Wan K.H."/>
            <person name="Doyle C."/>
            <person name="Baxter E.G."/>
            <person name="Helt G."/>
            <person name="Nelson C.R."/>
            <person name="Miklos G.L.G."/>
            <person name="Abril J.F."/>
            <person name="Agbayani A."/>
            <person name="An H.-J."/>
            <person name="Andrews-Pfannkoch C."/>
            <person name="Baldwin D."/>
            <person name="Ballew R.M."/>
            <person name="Basu A."/>
            <person name="Baxendale J."/>
            <person name="Bayraktaroglu L."/>
            <person name="Beasley E.M."/>
            <person name="Beeson K.Y."/>
            <person name="Benos P.V."/>
            <person name="Berman B.P."/>
            <person name="Bhandari D."/>
            <person name="Bolshakov S."/>
            <person name="Borkova D."/>
            <person name="Botchan M.R."/>
            <person name="Bouck J."/>
            <person name="Brokstein P."/>
            <person name="Brottier P."/>
            <person name="Burtis K.C."/>
            <person name="Busam D.A."/>
            <person name="Butler H."/>
            <person name="Cadieu E."/>
            <person name="Center A."/>
            <person name="Chandra I."/>
            <person name="Cherry J.M."/>
            <person name="Cawley S."/>
            <person name="Dahlke C."/>
            <person name="Davenport L.B."/>
            <person name="Davies P."/>
            <person name="de Pablos B."/>
            <person name="Delcher A."/>
            <person name="Deng Z."/>
            <person name="Mays A.D."/>
            <person name="Dew I."/>
            <person name="Dietz S.M."/>
            <person name="Dodson K."/>
            <person name="Doup L.E."/>
            <person name="Downes M."/>
            <person name="Dugan-Rocha S."/>
            <person name="Dunkov B.C."/>
            <person name="Dunn P."/>
            <person name="Durbin K.J."/>
            <person name="Evangelista C.C."/>
            <person name="Ferraz C."/>
            <person name="Ferriera S."/>
            <person name="Fleischmann W."/>
            <person name="Fosler C."/>
            <person name="Gabrielian A.E."/>
            <person name="Garg N.S."/>
            <person name="Gelbart W.M."/>
            <person name="Glasser K."/>
            <person name="Glodek A."/>
            <person name="Gong F."/>
            <person name="Gorrell J.H."/>
            <person name="Gu Z."/>
            <person name="Guan P."/>
            <person name="Harris M."/>
            <person name="Harris N.L."/>
            <person name="Harvey D.A."/>
            <person name="Heiman T.J."/>
            <person name="Hernandez J.R."/>
            <person name="Houck J."/>
            <person name="Hostin D."/>
            <person name="Houston K.A."/>
            <person name="Howland T.J."/>
            <person name="Wei M.-H."/>
            <person name="Ibegwam C."/>
            <person name="Jalali M."/>
            <person name="Kalush F."/>
            <person name="Karpen G.H."/>
            <person name="Ke Z."/>
            <person name="Kennison J.A."/>
            <person name="Ketchum K.A."/>
            <person name="Kimmel B.E."/>
            <person name="Kodira C.D."/>
            <person name="Kraft C.L."/>
            <person name="Kravitz S."/>
            <person name="Kulp D."/>
            <person name="Lai Z."/>
            <person name="Lasko P."/>
            <person name="Lei Y."/>
            <person name="Levitsky A.A."/>
            <person name="Li J.H."/>
            <person name="Li Z."/>
            <person name="Liang Y."/>
            <person name="Lin X."/>
            <person name="Liu X."/>
            <person name="Mattei B."/>
            <person name="McIntosh T.C."/>
            <person name="McLeod M.P."/>
            <person name="McPherson D."/>
            <person name="Merkulov G."/>
            <person name="Milshina N.V."/>
            <person name="Mobarry C."/>
            <person name="Morris J."/>
            <person name="Moshrefi A."/>
            <person name="Mount S.M."/>
            <person name="Moy M."/>
            <person name="Murphy B."/>
            <person name="Murphy L."/>
            <person name="Muzny D.M."/>
            <person name="Nelson D.L."/>
            <person name="Nelson D.R."/>
            <person name="Nelson K.A."/>
            <person name="Nixon K."/>
            <person name="Nusskern D.R."/>
            <person name="Pacleb J.M."/>
            <person name="Palazzolo M."/>
            <person name="Pittman G.S."/>
            <person name="Pan S."/>
            <person name="Pollard J."/>
            <person name="Puri V."/>
            <person name="Reese M.G."/>
            <person name="Reinert K."/>
            <person name="Remington K."/>
            <person name="Saunders R.D.C."/>
            <person name="Scheeler F."/>
            <person name="Shen H."/>
            <person name="Shue B.C."/>
            <person name="Siden-Kiamos I."/>
            <person name="Simpson M."/>
            <person name="Skupski M.P."/>
            <person name="Smith T.J."/>
            <person name="Spier E."/>
            <person name="Spradling A.C."/>
            <person name="Stapleton M."/>
            <person name="Strong R."/>
            <person name="Sun E."/>
            <person name="Svirskas R."/>
            <person name="Tector C."/>
            <person name="Turner R."/>
            <person name="Venter E."/>
            <person name="Wang A.H."/>
            <person name="Wang X."/>
            <person name="Wang Z.-Y."/>
            <person name="Wassarman D.A."/>
            <person name="Weinstock G.M."/>
            <person name="Weissenbach J."/>
            <person name="Williams S.M."/>
            <person name="Woodage T."/>
            <person name="Worley K.C."/>
            <person name="Wu D."/>
            <person name="Yang S."/>
            <person name="Yao Q.A."/>
            <person name="Ye J."/>
            <person name="Yeh R.-F."/>
            <person name="Zaveri J.S."/>
            <person name="Zhan M."/>
            <person name="Zhang G."/>
            <person name="Zhao Q."/>
            <person name="Zheng L."/>
            <person name="Zheng X.H."/>
            <person name="Zhong F.N."/>
            <person name="Zhong W."/>
            <person name="Zhou X."/>
            <person name="Zhu S.C."/>
            <person name="Zhu X."/>
            <person name="Smith H.O."/>
            <person name="Gibbs R.A."/>
            <person name="Myers E.W."/>
            <person name="Rubin G.M."/>
            <person name="Venter J.C."/>
        </authorList>
    </citation>
    <scope>NUCLEOTIDE SEQUENCE [LARGE SCALE GENOMIC DNA]</scope>
    <source>
        <strain>Berkeley</strain>
    </source>
</reference>
<reference key="3">
    <citation type="journal article" date="2002" name="Genome Biol.">
        <title>Annotation of the Drosophila melanogaster euchromatic genome: a systematic review.</title>
        <authorList>
            <person name="Misra S."/>
            <person name="Crosby M.A."/>
            <person name="Mungall C.J."/>
            <person name="Matthews B.B."/>
            <person name="Campbell K.S."/>
            <person name="Hradecky P."/>
            <person name="Huang Y."/>
            <person name="Kaminker J.S."/>
            <person name="Millburn G.H."/>
            <person name="Prochnik S.E."/>
            <person name="Smith C.D."/>
            <person name="Tupy J.L."/>
            <person name="Whitfield E.J."/>
            <person name="Bayraktaroglu L."/>
            <person name="Berman B.P."/>
            <person name="Bettencourt B.R."/>
            <person name="Celniker S.E."/>
            <person name="de Grey A.D.N.J."/>
            <person name="Drysdale R.A."/>
            <person name="Harris N.L."/>
            <person name="Richter J."/>
            <person name="Russo S."/>
            <person name="Schroeder A.J."/>
            <person name="Shu S.Q."/>
            <person name="Stapleton M."/>
            <person name="Yamada C."/>
            <person name="Ashburner M."/>
            <person name="Gelbart W.M."/>
            <person name="Rubin G.M."/>
            <person name="Lewis S.E."/>
        </authorList>
    </citation>
    <scope>GENOME REANNOTATION</scope>
    <source>
        <strain>Berkeley</strain>
    </source>
</reference>
<reference key="4">
    <citation type="journal article" date="2002" name="Genome Biol.">
        <title>A Drosophila full-length cDNA resource.</title>
        <authorList>
            <person name="Stapleton M."/>
            <person name="Carlson J.W."/>
            <person name="Brokstein P."/>
            <person name="Yu C."/>
            <person name="Champe M."/>
            <person name="George R.A."/>
            <person name="Guarin H."/>
            <person name="Kronmiller B."/>
            <person name="Pacleb J.M."/>
            <person name="Park S."/>
            <person name="Wan K.H."/>
            <person name="Rubin G.M."/>
            <person name="Celniker S.E."/>
        </authorList>
    </citation>
    <scope>NUCLEOTIDE SEQUENCE [LARGE SCALE MRNA]</scope>
    <source>
        <strain>Berkeley</strain>
        <tissue>Embryo</tissue>
    </source>
</reference>
<reference key="5">
    <citation type="journal article" date="2008" name="J. Proteome Res.">
        <title>Phosphoproteome analysis of Drosophila melanogaster embryos.</title>
        <authorList>
            <person name="Zhai B."/>
            <person name="Villen J."/>
            <person name="Beausoleil S.A."/>
            <person name="Mintseris J."/>
            <person name="Gygi S.P."/>
        </authorList>
    </citation>
    <scope>PHOSPHORYLATION [LARGE SCALE ANALYSIS] AT SER-126; SER-127; SER-267; SER-268; SER-270; SER-336; SER-338; SER-342; SER-343; SER-857 AND SER-859</scope>
    <scope>IDENTIFICATION BY MASS SPECTROMETRY</scope>
    <source>
        <tissue>Embryo</tissue>
    </source>
</reference>
<reference key="6">
    <citation type="journal article" date="2017" name="Mol. Cell. Biol.">
        <title>The Drosophila DAXX-Like Protein (DLP) Cooperates with ASF1 for H3.3 Deposition and Heterochromatin Formation.</title>
        <authorList>
            <person name="Fromental-Ramain C."/>
            <person name="Ramain P."/>
            <person name="Hamiche A."/>
        </authorList>
    </citation>
    <scope>FUNCTION</scope>
    <scope>DISRUPTION PHENOTYPE</scope>
</reference>
<organism>
    <name type="scientific">Drosophila melanogaster</name>
    <name type="common">Fruit fly</name>
    <dbReference type="NCBI Taxonomy" id="7227"/>
    <lineage>
        <taxon>Eukaryota</taxon>
        <taxon>Metazoa</taxon>
        <taxon>Ecdysozoa</taxon>
        <taxon>Arthropoda</taxon>
        <taxon>Hexapoda</taxon>
        <taxon>Insecta</taxon>
        <taxon>Pterygota</taxon>
        <taxon>Neoptera</taxon>
        <taxon>Endopterygota</taxon>
        <taxon>Diptera</taxon>
        <taxon>Brachycera</taxon>
        <taxon>Muscomorpha</taxon>
        <taxon>Ephydroidea</taxon>
        <taxon>Drosophilidae</taxon>
        <taxon>Drosophila</taxon>
        <taxon>Sophophora</taxon>
    </lineage>
</organism>
<protein>
    <recommendedName>
        <fullName>Transcriptional regulator ATRX homolog</fullName>
        <ecNumber>3.6.4.12</ecNumber>
    </recommendedName>
    <alternativeName>
        <fullName>ATP-dependent helicase XNP</fullName>
    </alternativeName>
    <alternativeName>
        <fullName>X-linked nuclear protein</fullName>
    </alternativeName>
    <alternativeName>
        <fullName>d-xnp</fullName>
    </alternativeName>
    <alternativeName>
        <fullName>dXNP</fullName>
    </alternativeName>
</protein>
<proteinExistence type="evidence at protein level"/>
<keyword id="KW-0067">ATP-binding</keyword>
<keyword id="KW-0158">Chromosome</keyword>
<keyword id="KW-0227">DNA damage</keyword>
<keyword id="KW-0234">DNA repair</keyword>
<keyword id="KW-0238">DNA-binding</keyword>
<keyword id="KW-0347">Helicase</keyword>
<keyword id="KW-0378">Hydrolase</keyword>
<keyword id="KW-0547">Nucleotide-binding</keyword>
<keyword id="KW-0539">Nucleus</keyword>
<keyword id="KW-0597">Phosphoprotein</keyword>
<keyword id="KW-1185">Reference proteome</keyword>
<feature type="chain" id="PRO_0000074309" description="Transcriptional regulator ATRX homolog">
    <location>
        <begin position="1"/>
        <end position="1311"/>
    </location>
</feature>
<feature type="domain" description="Helicase ATP-binding" evidence="1">
    <location>
        <begin position="476"/>
        <end position="664"/>
    </location>
</feature>
<feature type="domain" description="Helicase C-terminal" evidence="2">
    <location>
        <begin position="905"/>
        <end position="1085"/>
    </location>
</feature>
<feature type="region of interest" description="Disordered" evidence="3">
    <location>
        <begin position="1"/>
        <end position="384"/>
    </location>
</feature>
<feature type="region of interest" description="Disordered" evidence="3">
    <location>
        <begin position="837"/>
        <end position="878"/>
    </location>
</feature>
<feature type="region of interest" description="Disordered" evidence="3">
    <location>
        <begin position="1285"/>
        <end position="1311"/>
    </location>
</feature>
<feature type="short sequence motif" description="DEGH box">
    <location>
        <begin position="615"/>
        <end position="618"/>
    </location>
</feature>
<feature type="compositionally biased region" description="Basic and acidic residues" evidence="3">
    <location>
        <begin position="28"/>
        <end position="40"/>
    </location>
</feature>
<feature type="compositionally biased region" description="Low complexity" evidence="3">
    <location>
        <begin position="61"/>
        <end position="83"/>
    </location>
</feature>
<feature type="compositionally biased region" description="Polar residues" evidence="3">
    <location>
        <begin position="114"/>
        <end position="125"/>
    </location>
</feature>
<feature type="compositionally biased region" description="Acidic residues" evidence="3">
    <location>
        <begin position="155"/>
        <end position="166"/>
    </location>
</feature>
<feature type="compositionally biased region" description="Basic and acidic residues" evidence="3">
    <location>
        <begin position="181"/>
        <end position="202"/>
    </location>
</feature>
<feature type="compositionally biased region" description="Low complexity" evidence="3">
    <location>
        <begin position="219"/>
        <end position="237"/>
    </location>
</feature>
<feature type="compositionally biased region" description="Basic residues" evidence="3">
    <location>
        <begin position="241"/>
        <end position="265"/>
    </location>
</feature>
<feature type="compositionally biased region" description="Acidic residues" evidence="3">
    <location>
        <begin position="290"/>
        <end position="306"/>
    </location>
</feature>
<feature type="compositionally biased region" description="Basic and acidic residues" evidence="3">
    <location>
        <begin position="336"/>
        <end position="351"/>
    </location>
</feature>
<feature type="compositionally biased region" description="Basic residues" evidence="3">
    <location>
        <begin position="352"/>
        <end position="361"/>
    </location>
</feature>
<feature type="binding site" evidence="1">
    <location>
        <begin position="489"/>
        <end position="496"/>
    </location>
    <ligand>
        <name>ATP</name>
        <dbReference type="ChEBI" id="CHEBI:30616"/>
    </ligand>
</feature>
<feature type="modified residue" description="Phosphoserine" evidence="4">
    <location>
        <position position="126"/>
    </location>
</feature>
<feature type="modified residue" description="Phosphoserine" evidence="4">
    <location>
        <position position="127"/>
    </location>
</feature>
<feature type="modified residue" description="Phosphoserine" evidence="4">
    <location>
        <position position="267"/>
    </location>
</feature>
<feature type="modified residue" description="Phosphoserine" evidence="4">
    <location>
        <position position="268"/>
    </location>
</feature>
<feature type="modified residue" description="Phosphoserine" evidence="4">
    <location>
        <position position="270"/>
    </location>
</feature>
<feature type="modified residue" description="Phosphoserine" evidence="4">
    <location>
        <position position="336"/>
    </location>
</feature>
<feature type="modified residue" description="Phosphoserine" evidence="4">
    <location>
        <position position="338"/>
    </location>
</feature>
<feature type="modified residue" description="Phosphoserine" evidence="4">
    <location>
        <position position="342"/>
    </location>
</feature>
<feature type="modified residue" description="Phosphoserine" evidence="4">
    <location>
        <position position="343"/>
    </location>
</feature>
<feature type="modified residue" description="Phosphoserine" evidence="4">
    <location>
        <position position="857"/>
    </location>
</feature>
<feature type="modified residue" description="Phosphoserine" evidence="4">
    <location>
        <position position="859"/>
    </location>
</feature>
<feature type="sequence conflict" description="In Ref. 1; AAG40586." evidence="6" ref="1">
    <original>N</original>
    <variation>T</variation>
    <location>
        <position position="785"/>
    </location>
</feature>
<dbReference type="EC" id="3.6.4.12"/>
<dbReference type="EMBL" id="AF217802">
    <property type="protein sequence ID" value="AAG40586.1"/>
    <property type="molecule type" value="mRNA"/>
</dbReference>
<dbReference type="EMBL" id="AE014297">
    <property type="protein sequence ID" value="AAF56471.1"/>
    <property type="molecule type" value="Genomic_DNA"/>
</dbReference>
<dbReference type="EMBL" id="AE014297">
    <property type="protein sequence ID" value="AAN14055.1"/>
    <property type="molecule type" value="Genomic_DNA"/>
</dbReference>
<dbReference type="EMBL" id="AY058592">
    <property type="protein sequence ID" value="AAL13821.1"/>
    <property type="molecule type" value="mRNA"/>
</dbReference>
<dbReference type="RefSeq" id="NP_651398.1">
    <property type="nucleotide sequence ID" value="NM_143141.4"/>
</dbReference>
<dbReference type="RefSeq" id="NP_733107.1">
    <property type="nucleotide sequence ID" value="NM_170228.3"/>
</dbReference>
<dbReference type="SMR" id="Q9GQN5"/>
<dbReference type="BioGRID" id="67994">
    <property type="interactions" value="13"/>
</dbReference>
<dbReference type="FunCoup" id="Q9GQN5">
    <property type="interactions" value="643"/>
</dbReference>
<dbReference type="IntAct" id="Q9GQN5">
    <property type="interactions" value="1"/>
</dbReference>
<dbReference type="STRING" id="7227.FBpp0084213"/>
<dbReference type="iPTMnet" id="Q9GQN5"/>
<dbReference type="PaxDb" id="7227-FBpp0084212"/>
<dbReference type="DNASU" id="43080"/>
<dbReference type="EnsemblMetazoa" id="FBtr0084837">
    <property type="protein sequence ID" value="FBpp0084212"/>
    <property type="gene ID" value="FBgn0039338"/>
</dbReference>
<dbReference type="EnsemblMetazoa" id="FBtr0084838">
    <property type="protein sequence ID" value="FBpp0084213"/>
    <property type="gene ID" value="FBgn0039338"/>
</dbReference>
<dbReference type="GeneID" id="43080"/>
<dbReference type="KEGG" id="dme:Dmel_CG4548"/>
<dbReference type="UCSC" id="CG4548-RA">
    <property type="organism name" value="d. melanogaster"/>
</dbReference>
<dbReference type="AGR" id="FB:FBgn0039338"/>
<dbReference type="CTD" id="43080"/>
<dbReference type="FlyBase" id="FBgn0039338">
    <property type="gene designation" value="XNP"/>
</dbReference>
<dbReference type="VEuPathDB" id="VectorBase:FBgn0039338"/>
<dbReference type="eggNOG" id="KOG1015">
    <property type="taxonomic scope" value="Eukaryota"/>
</dbReference>
<dbReference type="GeneTree" id="ENSGT00940000155902"/>
<dbReference type="InParanoid" id="Q9GQN5"/>
<dbReference type="OMA" id="MELYTYE"/>
<dbReference type="OrthoDB" id="9900844at2759"/>
<dbReference type="PhylomeDB" id="Q9GQN5"/>
<dbReference type="SignaLink" id="Q9GQN5"/>
<dbReference type="BioGRID-ORCS" id="43080">
    <property type="hits" value="1 hit in 1 CRISPR screen"/>
</dbReference>
<dbReference type="GenomeRNAi" id="43080"/>
<dbReference type="PRO" id="PR:Q9GQN5"/>
<dbReference type="Proteomes" id="UP000000803">
    <property type="component" value="Chromosome 3R"/>
</dbReference>
<dbReference type="Bgee" id="FBgn0039338">
    <property type="expression patterns" value="Expressed in spermatogonium in testis and 221 other cell types or tissues"/>
</dbReference>
<dbReference type="ExpressionAtlas" id="Q9GQN5">
    <property type="expression patterns" value="baseline and differential"/>
</dbReference>
<dbReference type="GO" id="GO:0005694">
    <property type="term" value="C:chromosome"/>
    <property type="evidence" value="ECO:0007669"/>
    <property type="project" value="UniProtKB-SubCell"/>
</dbReference>
<dbReference type="GO" id="GO:0042585">
    <property type="term" value="C:germinal vesicle"/>
    <property type="evidence" value="ECO:0000314"/>
    <property type="project" value="FlyBase"/>
</dbReference>
<dbReference type="GO" id="GO:0005634">
    <property type="term" value="C:nucleus"/>
    <property type="evidence" value="ECO:0000314"/>
    <property type="project" value="FlyBase"/>
</dbReference>
<dbReference type="GO" id="GO:0005524">
    <property type="term" value="F:ATP binding"/>
    <property type="evidence" value="ECO:0007669"/>
    <property type="project" value="UniProtKB-KW"/>
</dbReference>
<dbReference type="GO" id="GO:0016887">
    <property type="term" value="F:ATP hydrolysis activity"/>
    <property type="evidence" value="ECO:0000314"/>
    <property type="project" value="FlyBase"/>
</dbReference>
<dbReference type="GO" id="GO:0140658">
    <property type="term" value="F:ATP-dependent chromatin remodeler activity"/>
    <property type="evidence" value="ECO:0000315"/>
    <property type="project" value="FlyBase"/>
</dbReference>
<dbReference type="GO" id="GO:0003677">
    <property type="term" value="F:DNA binding"/>
    <property type="evidence" value="ECO:0007669"/>
    <property type="project" value="UniProtKB-KW"/>
</dbReference>
<dbReference type="GO" id="GO:0015616">
    <property type="term" value="F:DNA translocase activity"/>
    <property type="evidence" value="ECO:0000314"/>
    <property type="project" value="FlyBase"/>
</dbReference>
<dbReference type="GO" id="GO:0004386">
    <property type="term" value="F:helicase activity"/>
    <property type="evidence" value="ECO:0007669"/>
    <property type="project" value="UniProtKB-KW"/>
</dbReference>
<dbReference type="GO" id="GO:0003712">
    <property type="term" value="F:transcription coregulator activity"/>
    <property type="evidence" value="ECO:0000318"/>
    <property type="project" value="GO_Central"/>
</dbReference>
<dbReference type="GO" id="GO:0007411">
    <property type="term" value="P:axon guidance"/>
    <property type="evidence" value="ECO:0000315"/>
    <property type="project" value="FlyBase"/>
</dbReference>
<dbReference type="GO" id="GO:0006325">
    <property type="term" value="P:chromatin organization"/>
    <property type="evidence" value="ECO:0000315"/>
    <property type="project" value="FlyBase"/>
</dbReference>
<dbReference type="GO" id="GO:0051276">
    <property type="term" value="P:chromosome organization"/>
    <property type="evidence" value="ECO:0000315"/>
    <property type="project" value="FlyBase"/>
</dbReference>
<dbReference type="GO" id="GO:0006281">
    <property type="term" value="P:DNA repair"/>
    <property type="evidence" value="ECO:0007669"/>
    <property type="project" value="UniProtKB-KW"/>
</dbReference>
<dbReference type="GO" id="GO:0008347">
    <property type="term" value="P:glial cell migration"/>
    <property type="evidence" value="ECO:0000315"/>
    <property type="project" value="FlyBase"/>
</dbReference>
<dbReference type="GO" id="GO:0097193">
    <property type="term" value="P:intrinsic apoptotic signaling pathway"/>
    <property type="evidence" value="ECO:0000315"/>
    <property type="project" value="FlyBase"/>
</dbReference>
<dbReference type="GO" id="GO:0031508">
    <property type="term" value="P:pericentric heterochromatin formation"/>
    <property type="evidence" value="ECO:0000315"/>
    <property type="project" value="FlyBase"/>
</dbReference>
<dbReference type="GO" id="GO:0046328">
    <property type="term" value="P:regulation of JNK cascade"/>
    <property type="evidence" value="ECO:0000316"/>
    <property type="project" value="FlyBase"/>
</dbReference>
<dbReference type="CDD" id="cd18068">
    <property type="entry name" value="DEXHc_ATRX"/>
    <property type="match status" value="1"/>
</dbReference>
<dbReference type="CDD" id="cd18793">
    <property type="entry name" value="SF2_C_SNF"/>
    <property type="match status" value="1"/>
</dbReference>
<dbReference type="FunFam" id="3.40.50.10810:FF:000011">
    <property type="entry name" value="Transcriptional regulator ATRX homolog"/>
    <property type="match status" value="1"/>
</dbReference>
<dbReference type="FunFam" id="3.40.50.300:FF:001729">
    <property type="entry name" value="Transcriptional regulator ATRX homolog"/>
    <property type="match status" value="1"/>
</dbReference>
<dbReference type="Gene3D" id="3.40.50.300">
    <property type="entry name" value="P-loop containing nucleotide triphosphate hydrolases"/>
    <property type="match status" value="1"/>
</dbReference>
<dbReference type="Gene3D" id="3.40.50.10810">
    <property type="entry name" value="Tandem AAA-ATPase domain"/>
    <property type="match status" value="1"/>
</dbReference>
<dbReference type="InterPro" id="IPR044574">
    <property type="entry name" value="ARIP4-like"/>
</dbReference>
<dbReference type="InterPro" id="IPR014001">
    <property type="entry name" value="Helicase_ATP-bd"/>
</dbReference>
<dbReference type="InterPro" id="IPR001650">
    <property type="entry name" value="Helicase_C-like"/>
</dbReference>
<dbReference type="InterPro" id="IPR027417">
    <property type="entry name" value="P-loop_NTPase"/>
</dbReference>
<dbReference type="InterPro" id="IPR038718">
    <property type="entry name" value="SNF2-like_sf"/>
</dbReference>
<dbReference type="InterPro" id="IPR049730">
    <property type="entry name" value="SNF2/RAD54-like_C"/>
</dbReference>
<dbReference type="InterPro" id="IPR000330">
    <property type="entry name" value="SNF2_N"/>
</dbReference>
<dbReference type="PANTHER" id="PTHR45797">
    <property type="entry name" value="RAD54-LIKE"/>
    <property type="match status" value="1"/>
</dbReference>
<dbReference type="PANTHER" id="PTHR45797:SF3">
    <property type="entry name" value="TRANSCRIPTIONAL REGULATOR ATRX HOMOLOG"/>
    <property type="match status" value="1"/>
</dbReference>
<dbReference type="Pfam" id="PF00271">
    <property type="entry name" value="Helicase_C"/>
    <property type="match status" value="1"/>
</dbReference>
<dbReference type="Pfam" id="PF00176">
    <property type="entry name" value="SNF2-rel_dom"/>
    <property type="match status" value="1"/>
</dbReference>
<dbReference type="SMART" id="SM00487">
    <property type="entry name" value="DEXDc"/>
    <property type="match status" value="1"/>
</dbReference>
<dbReference type="SMART" id="SM00490">
    <property type="entry name" value="HELICc"/>
    <property type="match status" value="1"/>
</dbReference>
<dbReference type="SUPFAM" id="SSF52540">
    <property type="entry name" value="P-loop containing nucleoside triphosphate hydrolases"/>
    <property type="match status" value="2"/>
</dbReference>
<dbReference type="PROSITE" id="PS51192">
    <property type="entry name" value="HELICASE_ATP_BIND_1"/>
    <property type="match status" value="1"/>
</dbReference>
<dbReference type="PROSITE" id="PS51194">
    <property type="entry name" value="HELICASE_CTER"/>
    <property type="match status" value="1"/>
</dbReference>
<evidence type="ECO:0000255" key="1">
    <source>
        <dbReference type="PROSITE-ProRule" id="PRU00541"/>
    </source>
</evidence>
<evidence type="ECO:0000255" key="2">
    <source>
        <dbReference type="PROSITE-ProRule" id="PRU00542"/>
    </source>
</evidence>
<evidence type="ECO:0000256" key="3">
    <source>
        <dbReference type="SAM" id="MobiDB-lite"/>
    </source>
</evidence>
<evidence type="ECO:0000269" key="4">
    <source>
    </source>
</evidence>
<evidence type="ECO:0000269" key="5">
    <source>
    </source>
</evidence>
<evidence type="ECO:0000305" key="6"/>
<sequence length="1311" mass="148220">MGKKNPNARHTDAATPLTTDDSNSSSVSRRESATESKSASESESSPPRSNTKQSRTHKNVKASGKATVSSSSDSDQAVANSSANDEEKEPVCKIRIVPLEKLLASPKTKERPSRGSQQKNVTINDSSDEEPLKGSKLVLPARKSRNKNASIIELSDSEEVDEEEESLLVAIPLPKEAQQTKPEKNSSKASKESIEKRQKAQKEATTSSARAIRSVNGTRRGSLSSERSSRASSSRAESPPRPKRCVVRLKRVSLPKTKPAQKPKKMSSDSEEAATTSKKSRQRRSKSESEADSDYEAPAAEEEEEEERKSSGDEEEAANSSDSEVMPQRKRRRKKSESDKGSSDFEPEEKQKKKGRKRIKKTSSGESDGDGDDDKQKNKRKHIRKIIKTKDLDLTTKEAAKEEDDRRKRIEDRQKLYNRIFVKSESVEINELVLDFDEESKKALLQVDKGLLKKLKPHQVAGVKFMWDACFETLKESQEKPGSGCILAHCMGLGKTLQVVTLSHTLLVNTRRTGVDRVLIISPLSTVNNWAREFTSWMKFANRNDIEVYDISRYKDKPTRIFKLNEWFNEGGVCILGYDMYRILANEKAKGLRKKQREQLMQALVDPGPDLVVCDEGHLLKNEKTSISKAVTRMRTKRRIVLTGTPLQNNLREYYCMIQFVKPNLLGTYKEYMNRFVNPITNGQYTDSTERDLRLMKHRSHILHKLLEGCIQRRDYSVLAPYLPPKHEYVVYTTLSELQQKLYGYYMTTHREQSGGDVVGKGARLFQDFQDLRRIWTHPMNLRVNSDNVIAKRLLSNDDSDMEGFICDETDEDEAASNSSDSCETFKSDASMSGLAASSGKVKKRKTRNGNAGGGDSDSDLEMLGGLGGGSSVQKDDPSEWWKPFVEERELNNVHHSPKLLILLRLLQQCEAIGDKLLVFSQSLQSLDVIEHFLSLVDSNTKNYEFEGDVGDFKGCWTSGKDYFRLDGSCSVEQREAMCKQFNNITNLRARLFLISTRAGGLGINLVAANRVVIFDVSWNPSHDTQSIFRVYRFGQIKPCYIYRLIAMGTMEQKVYERQVAKQATAKRVIDEQQISRHYNQTDLMELYSYELKPSTEREMPILPKDRLFAEILTEHEKLIFKYHEHDSLLEQEEHENLTEEERKSAWAEYEAEKTRTVQASQYMSYDRNAFGNQVMGQFGNASGSVTSNKIFGFRSDILLQLLNMKISKDHQELNQNQVIQLVPTYLQQLYNEMNNGDPTMYKDLLNLHSNIVHPSGMYMNPLLYANQNPNAAGYNQGTGGVPPMAGGSVAHGPPAAPAPGFEPDKVYEID</sequence>
<name>ATRX_DROME</name>
<accession>Q9GQN5</accession>
<accession>A4V3E4</accession>
<accession>Q9VBQ8</accession>
<gene>
    <name type="primary">XNP</name>
    <name type="ORF">CG4548</name>
</gene>
<comment type="function">
    <text evidence="5">Global transcriptional regulator. Modifies gene expression by affecting chromatin.</text>
</comment>
<comment type="catalytic activity">
    <reaction>
        <text>ATP + H2O = ADP + phosphate + H(+)</text>
        <dbReference type="Rhea" id="RHEA:13065"/>
        <dbReference type="ChEBI" id="CHEBI:15377"/>
        <dbReference type="ChEBI" id="CHEBI:15378"/>
        <dbReference type="ChEBI" id="CHEBI:30616"/>
        <dbReference type="ChEBI" id="CHEBI:43474"/>
        <dbReference type="ChEBI" id="CHEBI:456216"/>
        <dbReference type="EC" id="3.6.4.12"/>
    </reaction>
</comment>
<comment type="subcellular location">
    <subcellularLocation>
        <location evidence="5">Nucleus</location>
    </subcellularLocation>
    <subcellularLocation>
        <location evidence="5">Chromosome</location>
    </subcellularLocation>
    <text evidence="5">Localizes to pericentric heterochromatin associated with the X chromosome.</text>
</comment>
<comment type="disruption phenotype">
    <text evidence="5">Deregulates heterochromatin silencing.</text>
</comment>
<comment type="similarity">
    <text evidence="6">Belongs to the SNF2/RAD54 helicase family.</text>
</comment>